<name>PETL_ARGAN</name>
<dbReference type="EMBL" id="AJ704443">
    <property type="protein sequence ID" value="CAG28655.1"/>
    <property type="molecule type" value="Genomic_DNA"/>
</dbReference>
<dbReference type="SMR" id="Q5K3S1"/>
<dbReference type="GO" id="GO:0009535">
    <property type="term" value="C:chloroplast thylakoid membrane"/>
    <property type="evidence" value="ECO:0007669"/>
    <property type="project" value="UniProtKB-SubCell"/>
</dbReference>
<dbReference type="GO" id="GO:0009512">
    <property type="term" value="C:cytochrome b6f complex"/>
    <property type="evidence" value="ECO:0007669"/>
    <property type="project" value="InterPro"/>
</dbReference>
<dbReference type="GO" id="GO:0045158">
    <property type="term" value="F:electron transporter, transferring electrons within cytochrome b6/f complex of photosystem II activity"/>
    <property type="evidence" value="ECO:0007669"/>
    <property type="project" value="UniProtKB-UniRule"/>
</dbReference>
<dbReference type="GO" id="GO:0015979">
    <property type="term" value="P:photosynthesis"/>
    <property type="evidence" value="ECO:0007669"/>
    <property type="project" value="UniProtKB-KW"/>
</dbReference>
<dbReference type="HAMAP" id="MF_00433">
    <property type="entry name" value="Cytb6_f_PetL"/>
    <property type="match status" value="1"/>
</dbReference>
<dbReference type="InterPro" id="IPR007802">
    <property type="entry name" value="Cyt_b6/f_cplx_su6"/>
</dbReference>
<dbReference type="PANTHER" id="PTHR37266">
    <property type="entry name" value="CYTOCHROME B6-F COMPLEX SUBUNIT 6"/>
    <property type="match status" value="1"/>
</dbReference>
<dbReference type="PANTHER" id="PTHR37266:SF1">
    <property type="entry name" value="CYTOCHROME B6-F COMPLEX SUBUNIT 6"/>
    <property type="match status" value="1"/>
</dbReference>
<dbReference type="Pfam" id="PF05115">
    <property type="entry name" value="PetL"/>
    <property type="match status" value="1"/>
</dbReference>
<dbReference type="SUPFAM" id="SSF103436">
    <property type="entry name" value="PetL subunit of the cytochrome b6f complex"/>
    <property type="match status" value="1"/>
</dbReference>
<protein>
    <recommendedName>
        <fullName evidence="1">Cytochrome b6-f complex subunit 6</fullName>
    </recommendedName>
    <alternativeName>
        <fullName evidence="1">Cytochrome b6-f complex subunit PetL</fullName>
    </alternativeName>
    <alternativeName>
        <fullName evidence="1">Cytochrome b6-f complex subunit VI</fullName>
    </alternativeName>
</protein>
<organism>
    <name type="scientific">Argentina anserina</name>
    <name type="common">Silverweed cinquefoil</name>
    <name type="synonym">Potentilla anserina</name>
    <dbReference type="NCBI Taxonomy" id="57926"/>
    <lineage>
        <taxon>Eukaryota</taxon>
        <taxon>Viridiplantae</taxon>
        <taxon>Streptophyta</taxon>
        <taxon>Embryophyta</taxon>
        <taxon>Tracheophyta</taxon>
        <taxon>Spermatophyta</taxon>
        <taxon>Magnoliopsida</taxon>
        <taxon>eudicotyledons</taxon>
        <taxon>Gunneridae</taxon>
        <taxon>Pentapetalae</taxon>
        <taxon>rosids</taxon>
        <taxon>fabids</taxon>
        <taxon>Rosales</taxon>
        <taxon>Rosaceae</taxon>
        <taxon>Rosoideae</taxon>
        <taxon>Potentilleae</taxon>
        <taxon>Potentilleae incertae sedis</taxon>
        <taxon>Argentina</taxon>
    </lineage>
</organism>
<accession>Q5K3S1</accession>
<evidence type="ECO:0000255" key="1">
    <source>
        <dbReference type="HAMAP-Rule" id="MF_00433"/>
    </source>
</evidence>
<evidence type="ECO:0000269" key="2">
    <source>
    </source>
</evidence>
<feature type="chain" id="PRO_0000220473" description="Cytochrome b6-f complex subunit 6">
    <location>
        <begin position="1"/>
        <end position="31"/>
    </location>
</feature>
<feature type="transmembrane region" description="Helical" evidence="1">
    <location>
        <begin position="4"/>
        <end position="24"/>
    </location>
</feature>
<reference key="1">
    <citation type="journal article" date="2004" name="Nucleic Acids Res.">
        <title>Rapid evolution of RNA editing sites in a small non-essential plastid gene.</title>
        <authorList>
            <person name="Fiebig A."/>
            <person name="Stegemann S."/>
            <person name="Bock R."/>
        </authorList>
    </citation>
    <scope>NUCLEOTIDE SEQUENCE [GENOMIC DNA]</scope>
    <scope>RNA EDITING</scope>
    <source>
        <tissue>Leaf</tissue>
    </source>
</reference>
<sequence length="31" mass="3389">MLTITSYFGFLLAALTITSALFIGLSKIRLI</sequence>
<gene>
    <name evidence="1" type="primary">petL</name>
</gene>
<keyword id="KW-0150">Chloroplast</keyword>
<keyword id="KW-0249">Electron transport</keyword>
<keyword id="KW-0472">Membrane</keyword>
<keyword id="KW-0602">Photosynthesis</keyword>
<keyword id="KW-0934">Plastid</keyword>
<keyword id="KW-0691">RNA editing</keyword>
<keyword id="KW-0793">Thylakoid</keyword>
<keyword id="KW-0812">Transmembrane</keyword>
<keyword id="KW-1133">Transmembrane helix</keyword>
<keyword id="KW-0813">Transport</keyword>
<proteinExistence type="evidence at transcript level"/>
<geneLocation type="chloroplast"/>
<comment type="function">
    <text evidence="1">Component of the cytochrome b6-f complex, which mediates electron transfer between photosystem II (PSII) and photosystem I (PSI), cyclic electron flow around PSI, and state transitions. PetL is important for photoautotrophic growth as well as for electron transfer efficiency and stability of the cytochrome b6-f complex.</text>
</comment>
<comment type="subunit">
    <text evidence="1">The 4 large subunits of the cytochrome b6-f complex are cytochrome b6, subunit IV (17 kDa polypeptide, PetD), cytochrome f and the Rieske protein, while the 4 small subunits are PetG, PetL, PetM and PetN. The complex functions as a dimer.</text>
</comment>
<comment type="subcellular location">
    <subcellularLocation>
        <location evidence="1">Plastid</location>
        <location evidence="1">Chloroplast thylakoid membrane</location>
        <topology evidence="1">Single-pass membrane protein</topology>
    </subcellularLocation>
</comment>
<comment type="RNA editing">
    <location>
        <position position="2" evidence="2"/>
    </location>
</comment>
<comment type="similarity">
    <text evidence="1">Belongs to the PetL family.</text>
</comment>